<feature type="chain" id="PRO_0000127653" description="Selenide, water dikinase 2">
    <location>
        <begin position="1"/>
        <end position="370"/>
    </location>
</feature>
<feature type="active site" evidence="3">
    <location>
        <position position="24"/>
    </location>
</feature>
<feature type="binding site" evidence="2">
    <location>
        <position position="27"/>
    </location>
    <ligand>
        <name>ATP</name>
        <dbReference type="ChEBI" id="CHEBI:30616"/>
    </ligand>
</feature>
<feature type="binding site" evidence="2">
    <location>
        <begin position="55"/>
        <end position="57"/>
    </location>
    <ligand>
        <name>ATP</name>
        <dbReference type="ChEBI" id="CHEBI:30616"/>
    </ligand>
</feature>
<feature type="binding site" evidence="2">
    <location>
        <position position="57"/>
    </location>
    <ligand>
        <name>Mg(2+)</name>
        <dbReference type="ChEBI" id="CHEBI:18420"/>
    </ligand>
</feature>
<feature type="binding site" evidence="2">
    <location>
        <position position="76"/>
    </location>
    <ligand>
        <name>ATP</name>
        <dbReference type="ChEBI" id="CHEBI:30616"/>
    </ligand>
</feature>
<feature type="binding site" evidence="2">
    <location>
        <position position="99"/>
    </location>
    <ligand>
        <name>ATP</name>
        <dbReference type="ChEBI" id="CHEBI:30616"/>
    </ligand>
</feature>
<feature type="binding site" evidence="2">
    <location>
        <position position="99"/>
    </location>
    <ligand>
        <name>Mg(2+)</name>
        <dbReference type="ChEBI" id="CHEBI:18420"/>
    </ligand>
</feature>
<feature type="binding site" evidence="2">
    <location>
        <position position="258"/>
    </location>
    <ligand>
        <name>Mg(2+)</name>
        <dbReference type="ChEBI" id="CHEBI:18420"/>
    </ligand>
</feature>
<feature type="site" description="Important for catalytic activity" evidence="1">
    <location>
        <position position="27"/>
    </location>
</feature>
<feature type="non-standard amino acid" description="Selenocysteine">
    <location>
        <position position="24"/>
    </location>
</feature>
<feature type="splice variant" id="VSP_050768" description="In isoform B." evidence="5 6">
    <original>VLFQINKLPIIKNVLKFSTLVGQSTKF</original>
    <variation>HLGGPKHKVSIWQIGGNLWRPFNMPSC</variation>
    <location>
        <begin position="279"/>
        <end position="305"/>
    </location>
</feature>
<feature type="splice variant" id="VSP_050769" description="In isoform B." evidence="5 6">
    <location>
        <begin position="306"/>
        <end position="370"/>
    </location>
</feature>
<feature type="sequence conflict" description="In Ref. 2 and 5." evidence="7" ref="2 5">
    <original>L</original>
    <variation>F</variation>
    <location>
        <position position="189"/>
    </location>
</feature>
<feature type="sequence conflict" description="In Ref. 2; AAF80118." evidence="7" ref="2">
    <original>H</original>
    <variation>P</variation>
    <location sequence="Q9VKY8-2">
        <position position="279"/>
    </location>
</feature>
<proteinExistence type="evidence at transcript level"/>
<gene>
    <name type="primary">Sps2</name>
    <name type="ORF">CG5025</name>
</gene>
<protein>
    <recommendedName>
        <fullName>Selenide, water dikinase 2</fullName>
        <ecNumber evidence="2">2.7.9.3</ecNumber>
    </recommendedName>
    <alternativeName>
        <fullName>Selenium donor protein 2</fullName>
        <shortName>Dsps2</shortName>
    </alternativeName>
    <alternativeName>
        <fullName>Selenophosphate synthase 2</fullName>
    </alternativeName>
</protein>
<organism>
    <name type="scientific">Drosophila melanogaster</name>
    <name type="common">Fruit fly</name>
    <dbReference type="NCBI Taxonomy" id="7227"/>
    <lineage>
        <taxon>Eukaryota</taxon>
        <taxon>Metazoa</taxon>
        <taxon>Ecdysozoa</taxon>
        <taxon>Arthropoda</taxon>
        <taxon>Hexapoda</taxon>
        <taxon>Insecta</taxon>
        <taxon>Pterygota</taxon>
        <taxon>Neoptera</taxon>
        <taxon>Endopterygota</taxon>
        <taxon>Diptera</taxon>
        <taxon>Brachycera</taxon>
        <taxon>Muscomorpha</taxon>
        <taxon>Ephydroidea</taxon>
        <taxon>Drosophilidae</taxon>
        <taxon>Drosophila</taxon>
        <taxon>Sophophora</taxon>
    </lineage>
</organism>
<accession>Q9VKY8</accession>
<accession>Q8IPC0</accession>
<accession>Q9NAX3</accession>
<accession>Q9NFK7</accession>
<keyword id="KW-0025">Alternative splicing</keyword>
<keyword id="KW-0067">ATP-binding</keyword>
<keyword id="KW-0418">Kinase</keyword>
<keyword id="KW-0460">Magnesium</keyword>
<keyword id="KW-0479">Metal-binding</keyword>
<keyword id="KW-0547">Nucleotide-binding</keyword>
<keyword id="KW-1185">Reference proteome</keyword>
<keyword id="KW-0711">Selenium</keyword>
<keyword id="KW-0712">Selenocysteine</keyword>
<keyword id="KW-0808">Transferase</keyword>
<comment type="function">
    <text evidence="2">Synthesizes selenophosphate from selenide and ATP.</text>
</comment>
<comment type="catalytic activity">
    <reaction evidence="2">
        <text>hydrogenselenide + ATP + H2O = selenophosphate + AMP + phosphate + 2 H(+)</text>
        <dbReference type="Rhea" id="RHEA:18737"/>
        <dbReference type="ChEBI" id="CHEBI:15377"/>
        <dbReference type="ChEBI" id="CHEBI:15378"/>
        <dbReference type="ChEBI" id="CHEBI:16144"/>
        <dbReference type="ChEBI" id="CHEBI:29317"/>
        <dbReference type="ChEBI" id="CHEBI:30616"/>
        <dbReference type="ChEBI" id="CHEBI:43474"/>
        <dbReference type="ChEBI" id="CHEBI:456215"/>
        <dbReference type="EC" id="2.7.9.3"/>
    </reaction>
</comment>
<comment type="cofactor">
    <cofactor evidence="2">
        <name>Mg(2+)</name>
        <dbReference type="ChEBI" id="CHEBI:18420"/>
    </cofactor>
    <text evidence="2">Binds 1 Mg(2+) ion per subunit.</text>
</comment>
<comment type="subunit">
    <text evidence="2">Homodimer.</text>
</comment>
<comment type="alternative products">
    <event type="alternative splicing"/>
    <isoform>
        <id>Q9VKY8-1</id>
        <name>A</name>
        <sequence type="displayed"/>
    </isoform>
    <isoform>
        <id>Q9VKY8-2</id>
        <name>B</name>
        <sequence type="described" ref="VSP_050768 VSP_050769"/>
    </isoform>
</comment>
<comment type="tissue specificity">
    <text evidence="4">First expressed in the midgut anlagen with subsequent expression in a variety of tissues including the gut and nervous system.</text>
</comment>
<comment type="developmental stage">
    <text evidence="4">Expressed both maternally and zygotically.</text>
</comment>
<comment type="similarity">
    <text evidence="7">Belongs to the selenophosphate synthase 1 family. Class I subfamily.</text>
</comment>
<comment type="sequence caution" evidence="7">
    <conflict type="erroneous termination">
        <sequence resource="EMBL-CDS" id="AAR99143"/>
    </conflict>
    <text>Truncated C-terminus.</text>
</comment>
<sequence length="370" mass="41131">MFQPEKHGLEPDFQLTKFTTHTGUSCKIPQKVLEKYLRGTEIENKNNDGYLIGSGMDCAVIPLKRHKDYLLIQTVDFFYPMVNDPELLGRIALANVLSDVYAVGVTQFDTVEMIVSTSTSFSEKERDVVIGLVMKGFQNSLKANGYRNTPLIIRQLKINPWCIIGGIATSVCRSEEIILPSNAQPGDVLVLTKPLGGQMAMDAHLWQLNQTEKYKKLLSECSDADIKETFEIAVKSMTYLNKNAALLMHKYQAHCATDITGFGLLGHANNLAQFQKEKVLFQINKLPIIKNVLKFSTLVGQSTKFRSGRSVETSGGLLICLPADAADKFCRDFEEATNGEQKSFQIGHVTAANESDAVLCEDVEFIEVSL</sequence>
<evidence type="ECO:0000250" key="1">
    <source>
        <dbReference type="UniProtKB" id="P16456"/>
    </source>
</evidence>
<evidence type="ECO:0000250" key="2">
    <source>
        <dbReference type="UniProtKB" id="P49903"/>
    </source>
</evidence>
<evidence type="ECO:0000255" key="3"/>
<evidence type="ECO:0000269" key="4">
    <source>
    </source>
</evidence>
<evidence type="ECO:0000303" key="5">
    <source>
    </source>
</evidence>
<evidence type="ECO:0000303" key="6">
    <source>
    </source>
</evidence>
<evidence type="ECO:0000305" key="7"/>
<dbReference type="EC" id="2.7.9.3" evidence="2"/>
<dbReference type="EMBL" id="AJ278068">
    <property type="protein sequence ID" value="CAB93526.2"/>
    <property type="molecule type" value="mRNA"/>
</dbReference>
<dbReference type="EMBL" id="AF279253">
    <property type="protein sequence ID" value="AAF80118.1"/>
    <property type="molecule type" value="mRNA"/>
</dbReference>
<dbReference type="EMBL" id="AE014134">
    <property type="protein sequence ID" value="AAF52918.2"/>
    <property type="molecule type" value="Genomic_DNA"/>
</dbReference>
<dbReference type="EMBL" id="AE014134">
    <property type="protein sequence ID" value="AAN10746.2"/>
    <property type="molecule type" value="Genomic_DNA"/>
</dbReference>
<dbReference type="EMBL" id="BT011485">
    <property type="protein sequence ID" value="AAR99143.1"/>
    <property type="status" value="ALT_SEQ"/>
    <property type="molecule type" value="mRNA"/>
</dbReference>
<dbReference type="RefSeq" id="NP_001260329.1">
    <molecule id="Q9VKY8-1"/>
    <property type="nucleotide sequence ID" value="NM_001273400.2"/>
</dbReference>
<dbReference type="RefSeq" id="NP_477478.4">
    <molecule id="Q9VKY8-1"/>
    <property type="nucleotide sequence ID" value="NM_058130.6"/>
</dbReference>
<dbReference type="BioGRID" id="60482">
    <property type="interactions" value="4"/>
</dbReference>
<dbReference type="FunCoup" id="Q9VKY8">
    <property type="interactions" value="138"/>
</dbReference>
<dbReference type="IntAct" id="Q9VKY8">
    <property type="interactions" value="1"/>
</dbReference>
<dbReference type="STRING" id="7227.FBpp0079588"/>
<dbReference type="PaxDb" id="7227-FBpp0079588"/>
<dbReference type="EnsemblMetazoa" id="FBtr0079998">
    <molecule id="Q9VKY8-1"/>
    <property type="protein sequence ID" value="FBpp0079588"/>
    <property type="gene ID" value="FBgn0032224"/>
</dbReference>
<dbReference type="EnsemblMetazoa" id="FBtr0310115">
    <molecule id="Q9VKY8-1"/>
    <property type="protein sequence ID" value="FBpp0301800"/>
    <property type="gene ID" value="FBgn0032224"/>
</dbReference>
<dbReference type="GeneID" id="34397"/>
<dbReference type="KEGG" id="dme:Dmel_CG5025"/>
<dbReference type="AGR" id="FB:FBgn0032224"/>
<dbReference type="CTD" id="34397"/>
<dbReference type="FlyBase" id="FBgn0032224">
    <property type="gene designation" value="Sps2"/>
</dbReference>
<dbReference type="VEuPathDB" id="VectorBase:FBgn0032224"/>
<dbReference type="eggNOG" id="KOG3939">
    <property type="taxonomic scope" value="Eukaryota"/>
</dbReference>
<dbReference type="GeneTree" id="ENSGT00390000000950"/>
<dbReference type="HOGENOM" id="CLU_032859_1_0_1"/>
<dbReference type="InParanoid" id="Q9VKY8"/>
<dbReference type="OMA" id="INPWCIV"/>
<dbReference type="OrthoDB" id="409395at2759"/>
<dbReference type="PhylomeDB" id="Q9VKY8"/>
<dbReference type="BRENDA" id="2.7.9.3">
    <property type="organism ID" value="1994"/>
</dbReference>
<dbReference type="BioGRID-ORCS" id="34397">
    <property type="hits" value="0 hits in 3 CRISPR screens"/>
</dbReference>
<dbReference type="GenomeRNAi" id="34397"/>
<dbReference type="PRO" id="PR:Q9VKY8"/>
<dbReference type="Proteomes" id="UP000000803">
    <property type="component" value="Chromosome 2L"/>
</dbReference>
<dbReference type="Bgee" id="FBgn0032224">
    <property type="expression patterns" value="Expressed in crop (Drosophila) and 98 other cell types or tissues"/>
</dbReference>
<dbReference type="ExpressionAtlas" id="Q9VKY8">
    <property type="expression patterns" value="baseline and differential"/>
</dbReference>
<dbReference type="GO" id="GO:0005737">
    <property type="term" value="C:cytoplasm"/>
    <property type="evidence" value="ECO:0000318"/>
    <property type="project" value="GO_Central"/>
</dbReference>
<dbReference type="GO" id="GO:0005524">
    <property type="term" value="F:ATP binding"/>
    <property type="evidence" value="ECO:0000304"/>
    <property type="project" value="UniProtKB"/>
</dbReference>
<dbReference type="GO" id="GO:0046872">
    <property type="term" value="F:metal ion binding"/>
    <property type="evidence" value="ECO:0007669"/>
    <property type="project" value="UniProtKB-KW"/>
</dbReference>
<dbReference type="GO" id="GO:0017076">
    <property type="term" value="F:purine nucleotide binding"/>
    <property type="evidence" value="ECO:0000250"/>
    <property type="project" value="FlyBase"/>
</dbReference>
<dbReference type="GO" id="GO:0004756">
    <property type="term" value="F:selenide, water dikinase activity"/>
    <property type="evidence" value="ECO:0000250"/>
    <property type="project" value="FlyBase"/>
</dbReference>
<dbReference type="GO" id="GO:0016260">
    <property type="term" value="P:selenocysteine biosynthetic process"/>
    <property type="evidence" value="ECO:0000250"/>
    <property type="project" value="FlyBase"/>
</dbReference>
<dbReference type="CDD" id="cd02195">
    <property type="entry name" value="SelD"/>
    <property type="match status" value="1"/>
</dbReference>
<dbReference type="FunFam" id="3.90.650.10:FF:000010">
    <property type="entry name" value="Selenide, water dikinase"/>
    <property type="match status" value="1"/>
</dbReference>
<dbReference type="Gene3D" id="3.90.650.10">
    <property type="entry name" value="PurM-like C-terminal domain"/>
    <property type="match status" value="1"/>
</dbReference>
<dbReference type="Gene3D" id="3.30.1330.10">
    <property type="entry name" value="PurM-like, N-terminal domain"/>
    <property type="match status" value="1"/>
</dbReference>
<dbReference type="InterPro" id="IPR010918">
    <property type="entry name" value="PurM-like_C_dom"/>
</dbReference>
<dbReference type="InterPro" id="IPR036676">
    <property type="entry name" value="PurM-like_C_sf"/>
</dbReference>
<dbReference type="InterPro" id="IPR016188">
    <property type="entry name" value="PurM-like_N"/>
</dbReference>
<dbReference type="InterPro" id="IPR036921">
    <property type="entry name" value="PurM-like_N_sf"/>
</dbReference>
<dbReference type="InterPro" id="IPR004536">
    <property type="entry name" value="SPS/SelD"/>
</dbReference>
<dbReference type="NCBIfam" id="TIGR00476">
    <property type="entry name" value="selD"/>
    <property type="match status" value="1"/>
</dbReference>
<dbReference type="PANTHER" id="PTHR10256:SF0">
    <property type="entry name" value="INACTIVE SELENIDE, WATER DIKINASE-LIKE PROTEIN-RELATED"/>
    <property type="match status" value="1"/>
</dbReference>
<dbReference type="PANTHER" id="PTHR10256">
    <property type="entry name" value="SELENIDE, WATER DIKINASE"/>
    <property type="match status" value="1"/>
</dbReference>
<dbReference type="Pfam" id="PF00586">
    <property type="entry name" value="AIRS"/>
    <property type="match status" value="1"/>
</dbReference>
<dbReference type="Pfam" id="PF02769">
    <property type="entry name" value="AIRS_C"/>
    <property type="match status" value="1"/>
</dbReference>
<dbReference type="PIRSF" id="PIRSF036407">
    <property type="entry name" value="Selenphspht_syn"/>
    <property type="match status" value="1"/>
</dbReference>
<dbReference type="SUPFAM" id="SSF56042">
    <property type="entry name" value="PurM C-terminal domain-like"/>
    <property type="match status" value="1"/>
</dbReference>
<dbReference type="SUPFAM" id="SSF55326">
    <property type="entry name" value="PurM N-terminal domain-like"/>
    <property type="match status" value="1"/>
</dbReference>
<name>SPS2_DROME</name>
<reference key="1">
    <citation type="journal article" date="2000" name="EMBO Rep.">
        <title>The class 2 selenophosphate synthetase gene of Drosophila contains a functional mammalian-type SECIS.</title>
        <authorList>
            <person name="Hirosawa-Takamori M."/>
            <person name="Jackle H."/>
            <person name="Vorbruggen G."/>
        </authorList>
    </citation>
    <scope>NUCLEOTIDE SEQUENCE (ISOFORM A)</scope>
    <scope>PROBABLE SELENOCYSTEINE AT SEC-24</scope>
    <scope>TISSUE SPECIFICITY</scope>
    <scope>DEVELOPMENTAL STAGE</scope>
    <source>
        <tissue>Embryo</tissue>
    </source>
</reference>
<reference key="2">
    <citation type="journal article" date="2000" name="Nucleic Acids Res.">
        <title>Structural analysis of new local features in SECIS RNA hairpins.</title>
        <authorList>
            <person name="Fagegaltier D."/>
            <person name="Lescure A."/>
            <person name="Walczak R."/>
            <person name="Carbon P."/>
            <person name="Krol A."/>
        </authorList>
    </citation>
    <scope>NUCLEOTIDE SEQUENCE [MRNA] (ISOFORM B)</scope>
</reference>
<reference key="3">
    <citation type="journal article" date="2000" name="Science">
        <title>The genome sequence of Drosophila melanogaster.</title>
        <authorList>
            <person name="Adams M.D."/>
            <person name="Celniker S.E."/>
            <person name="Holt R.A."/>
            <person name="Evans C.A."/>
            <person name="Gocayne J.D."/>
            <person name="Amanatides P.G."/>
            <person name="Scherer S.E."/>
            <person name="Li P.W."/>
            <person name="Hoskins R.A."/>
            <person name="Galle R.F."/>
            <person name="George R.A."/>
            <person name="Lewis S.E."/>
            <person name="Richards S."/>
            <person name="Ashburner M."/>
            <person name="Henderson S.N."/>
            <person name="Sutton G.G."/>
            <person name="Wortman J.R."/>
            <person name="Yandell M.D."/>
            <person name="Zhang Q."/>
            <person name="Chen L.X."/>
            <person name="Brandon R.C."/>
            <person name="Rogers Y.-H.C."/>
            <person name="Blazej R.G."/>
            <person name="Champe M."/>
            <person name="Pfeiffer B.D."/>
            <person name="Wan K.H."/>
            <person name="Doyle C."/>
            <person name="Baxter E.G."/>
            <person name="Helt G."/>
            <person name="Nelson C.R."/>
            <person name="Miklos G.L.G."/>
            <person name="Abril J.F."/>
            <person name="Agbayani A."/>
            <person name="An H.-J."/>
            <person name="Andrews-Pfannkoch C."/>
            <person name="Baldwin D."/>
            <person name="Ballew R.M."/>
            <person name="Basu A."/>
            <person name="Baxendale J."/>
            <person name="Bayraktaroglu L."/>
            <person name="Beasley E.M."/>
            <person name="Beeson K.Y."/>
            <person name="Benos P.V."/>
            <person name="Berman B.P."/>
            <person name="Bhandari D."/>
            <person name="Bolshakov S."/>
            <person name="Borkova D."/>
            <person name="Botchan M.R."/>
            <person name="Bouck J."/>
            <person name="Brokstein P."/>
            <person name="Brottier P."/>
            <person name="Burtis K.C."/>
            <person name="Busam D.A."/>
            <person name="Butler H."/>
            <person name="Cadieu E."/>
            <person name="Center A."/>
            <person name="Chandra I."/>
            <person name="Cherry J.M."/>
            <person name="Cawley S."/>
            <person name="Dahlke C."/>
            <person name="Davenport L.B."/>
            <person name="Davies P."/>
            <person name="de Pablos B."/>
            <person name="Delcher A."/>
            <person name="Deng Z."/>
            <person name="Mays A.D."/>
            <person name="Dew I."/>
            <person name="Dietz S.M."/>
            <person name="Dodson K."/>
            <person name="Doup L.E."/>
            <person name="Downes M."/>
            <person name="Dugan-Rocha S."/>
            <person name="Dunkov B.C."/>
            <person name="Dunn P."/>
            <person name="Durbin K.J."/>
            <person name="Evangelista C.C."/>
            <person name="Ferraz C."/>
            <person name="Ferriera S."/>
            <person name="Fleischmann W."/>
            <person name="Fosler C."/>
            <person name="Gabrielian A.E."/>
            <person name="Garg N.S."/>
            <person name="Gelbart W.M."/>
            <person name="Glasser K."/>
            <person name="Glodek A."/>
            <person name="Gong F."/>
            <person name="Gorrell J.H."/>
            <person name="Gu Z."/>
            <person name="Guan P."/>
            <person name="Harris M."/>
            <person name="Harris N.L."/>
            <person name="Harvey D.A."/>
            <person name="Heiman T.J."/>
            <person name="Hernandez J.R."/>
            <person name="Houck J."/>
            <person name="Hostin D."/>
            <person name="Houston K.A."/>
            <person name="Howland T.J."/>
            <person name="Wei M.-H."/>
            <person name="Ibegwam C."/>
            <person name="Jalali M."/>
            <person name="Kalush F."/>
            <person name="Karpen G.H."/>
            <person name="Ke Z."/>
            <person name="Kennison J.A."/>
            <person name="Ketchum K.A."/>
            <person name="Kimmel B.E."/>
            <person name="Kodira C.D."/>
            <person name="Kraft C.L."/>
            <person name="Kravitz S."/>
            <person name="Kulp D."/>
            <person name="Lai Z."/>
            <person name="Lasko P."/>
            <person name="Lei Y."/>
            <person name="Levitsky A.A."/>
            <person name="Li J.H."/>
            <person name="Li Z."/>
            <person name="Liang Y."/>
            <person name="Lin X."/>
            <person name="Liu X."/>
            <person name="Mattei B."/>
            <person name="McIntosh T.C."/>
            <person name="McLeod M.P."/>
            <person name="McPherson D."/>
            <person name="Merkulov G."/>
            <person name="Milshina N.V."/>
            <person name="Mobarry C."/>
            <person name="Morris J."/>
            <person name="Moshrefi A."/>
            <person name="Mount S.M."/>
            <person name="Moy M."/>
            <person name="Murphy B."/>
            <person name="Murphy L."/>
            <person name="Muzny D.M."/>
            <person name="Nelson D.L."/>
            <person name="Nelson D.R."/>
            <person name="Nelson K.A."/>
            <person name="Nixon K."/>
            <person name="Nusskern D.R."/>
            <person name="Pacleb J.M."/>
            <person name="Palazzolo M."/>
            <person name="Pittman G.S."/>
            <person name="Pan S."/>
            <person name="Pollard J."/>
            <person name="Puri V."/>
            <person name="Reese M.G."/>
            <person name="Reinert K."/>
            <person name="Remington K."/>
            <person name="Saunders R.D.C."/>
            <person name="Scheeler F."/>
            <person name="Shen H."/>
            <person name="Shue B.C."/>
            <person name="Siden-Kiamos I."/>
            <person name="Simpson M."/>
            <person name="Skupski M.P."/>
            <person name="Smith T.J."/>
            <person name="Spier E."/>
            <person name="Spradling A.C."/>
            <person name="Stapleton M."/>
            <person name="Strong R."/>
            <person name="Sun E."/>
            <person name="Svirskas R."/>
            <person name="Tector C."/>
            <person name="Turner R."/>
            <person name="Venter E."/>
            <person name="Wang A.H."/>
            <person name="Wang X."/>
            <person name="Wang Z.-Y."/>
            <person name="Wassarman D.A."/>
            <person name="Weinstock G.M."/>
            <person name="Weissenbach J."/>
            <person name="Williams S.M."/>
            <person name="Woodage T."/>
            <person name="Worley K.C."/>
            <person name="Wu D."/>
            <person name="Yang S."/>
            <person name="Yao Q.A."/>
            <person name="Ye J."/>
            <person name="Yeh R.-F."/>
            <person name="Zaveri J.S."/>
            <person name="Zhan M."/>
            <person name="Zhang G."/>
            <person name="Zhao Q."/>
            <person name="Zheng L."/>
            <person name="Zheng X.H."/>
            <person name="Zhong F.N."/>
            <person name="Zhong W."/>
            <person name="Zhou X."/>
            <person name="Zhu S.C."/>
            <person name="Zhu X."/>
            <person name="Smith H.O."/>
            <person name="Gibbs R.A."/>
            <person name="Myers E.W."/>
            <person name="Rubin G.M."/>
            <person name="Venter J.C."/>
        </authorList>
    </citation>
    <scope>NUCLEOTIDE SEQUENCE [LARGE SCALE GENOMIC DNA]</scope>
    <source>
        <strain>Berkeley</strain>
    </source>
</reference>
<reference key="4">
    <citation type="journal article" date="2002" name="Genome Biol.">
        <title>Annotation of the Drosophila melanogaster euchromatic genome: a systematic review.</title>
        <authorList>
            <person name="Misra S."/>
            <person name="Crosby M.A."/>
            <person name="Mungall C.J."/>
            <person name="Matthews B.B."/>
            <person name="Campbell K.S."/>
            <person name="Hradecky P."/>
            <person name="Huang Y."/>
            <person name="Kaminker J.S."/>
            <person name="Millburn G.H."/>
            <person name="Prochnik S.E."/>
            <person name="Smith C.D."/>
            <person name="Tupy J.L."/>
            <person name="Whitfield E.J."/>
            <person name="Bayraktaroglu L."/>
            <person name="Berman B.P."/>
            <person name="Bettencourt B.R."/>
            <person name="Celniker S.E."/>
            <person name="de Grey A.D.N.J."/>
            <person name="Drysdale R.A."/>
            <person name="Harris N.L."/>
            <person name="Richter J."/>
            <person name="Russo S."/>
            <person name="Schroeder A.J."/>
            <person name="Shu S.Q."/>
            <person name="Stapleton M."/>
            <person name="Yamada C."/>
            <person name="Ashburner M."/>
            <person name="Gelbart W.M."/>
            <person name="Rubin G.M."/>
            <person name="Lewis S.E."/>
        </authorList>
    </citation>
    <scope>GENOME REANNOTATION</scope>
    <scope>ALTERNATIVE SPLICING</scope>
    <source>
        <strain>Berkeley</strain>
    </source>
</reference>
<reference key="5">
    <citation type="journal article" date="2002" name="Genome Biol.">
        <title>A Drosophila full-length cDNA resource.</title>
        <authorList>
            <person name="Stapleton M."/>
            <person name="Carlson J.W."/>
            <person name="Brokstein P."/>
            <person name="Yu C."/>
            <person name="Champe M."/>
            <person name="George R.A."/>
            <person name="Guarin H."/>
            <person name="Kronmiller B."/>
            <person name="Pacleb J.M."/>
            <person name="Park S."/>
            <person name="Wan K.H."/>
            <person name="Rubin G.M."/>
            <person name="Celniker S.E."/>
        </authorList>
    </citation>
    <scope>NUCLEOTIDE SEQUENCE [LARGE SCALE MRNA] (ISOFORM B)</scope>
    <source>
        <strain>Berkeley</strain>
        <tissue>Embryo</tissue>
    </source>
</reference>